<comment type="function">
    <text evidence="1">Catalyzes the addition and repair of the essential 3'-terminal CCA sequence in tRNAs without using a nucleic acid template. Adds these three nucleotides in the order of C, C, and A to the tRNA nucleotide-73, using CTP and ATP as substrates and producing inorganic pyrophosphate. tRNA 3'-terminal CCA addition is required both for tRNA processing and repair. Also involved in tRNA surveillance by mediating tandem CCA addition to generate a CCACCA at the 3' terminus of unstable tRNAs. While stable tRNAs receive only 3'-terminal CCA, unstable tRNAs are marked with CCACCA and rapidly degraded.</text>
</comment>
<comment type="catalytic activity">
    <reaction evidence="1">
        <text>a tRNA precursor + 2 CTP + ATP = a tRNA with a 3' CCA end + 3 diphosphate</text>
        <dbReference type="Rhea" id="RHEA:14433"/>
        <dbReference type="Rhea" id="RHEA-COMP:10465"/>
        <dbReference type="Rhea" id="RHEA-COMP:10468"/>
        <dbReference type="ChEBI" id="CHEBI:30616"/>
        <dbReference type="ChEBI" id="CHEBI:33019"/>
        <dbReference type="ChEBI" id="CHEBI:37563"/>
        <dbReference type="ChEBI" id="CHEBI:74896"/>
        <dbReference type="ChEBI" id="CHEBI:83071"/>
        <dbReference type="EC" id="2.7.7.72"/>
    </reaction>
</comment>
<comment type="catalytic activity">
    <reaction evidence="1">
        <text>a tRNA with a 3' CCA end + 2 CTP + ATP = a tRNA with a 3' CCACCA end + 3 diphosphate</text>
        <dbReference type="Rhea" id="RHEA:76235"/>
        <dbReference type="Rhea" id="RHEA-COMP:10468"/>
        <dbReference type="Rhea" id="RHEA-COMP:18655"/>
        <dbReference type="ChEBI" id="CHEBI:30616"/>
        <dbReference type="ChEBI" id="CHEBI:33019"/>
        <dbReference type="ChEBI" id="CHEBI:37563"/>
        <dbReference type="ChEBI" id="CHEBI:83071"/>
        <dbReference type="ChEBI" id="CHEBI:195187"/>
    </reaction>
    <physiologicalReaction direction="left-to-right" evidence="1">
        <dbReference type="Rhea" id="RHEA:76236"/>
    </physiologicalReaction>
</comment>
<comment type="cofactor">
    <cofactor evidence="1">
        <name>Mg(2+)</name>
        <dbReference type="ChEBI" id="CHEBI:18420"/>
    </cofactor>
    <text evidence="1">Magnesium is required for nucleotidyltransferase activity.</text>
</comment>
<comment type="cofactor">
    <cofactor evidence="1">
        <name>Ni(2+)</name>
        <dbReference type="ChEBI" id="CHEBI:49786"/>
    </cofactor>
    <text evidence="1">Nickel for phosphatase activity.</text>
</comment>
<comment type="subunit">
    <text evidence="1">Monomer. Can also form homodimers and oligomers.</text>
</comment>
<comment type="domain">
    <text evidence="1">Comprises two domains: an N-terminal domain containing the nucleotidyltransferase activity and a C-terminal HD domain associated with both phosphodiesterase and phosphatase activities.</text>
</comment>
<comment type="miscellaneous">
    <text evidence="1">A single active site specifically recognizes both ATP and CTP and is responsible for their addition.</text>
</comment>
<comment type="similarity">
    <text evidence="1">Belongs to the tRNA nucleotidyltransferase/poly(A) polymerase family. Bacterial CCA-adding enzyme type 1 subfamily.</text>
</comment>
<accession>Q8XBL4</accession>
<accession>Q7AAQ4</accession>
<name>CCA_ECO57</name>
<protein>
    <recommendedName>
        <fullName evidence="1">Multifunctional CCA protein</fullName>
    </recommendedName>
    <domain>
        <recommendedName>
            <fullName evidence="1">CCA-adding enzyme</fullName>
            <ecNumber evidence="1">2.7.7.72</ecNumber>
        </recommendedName>
        <alternativeName>
            <fullName evidence="1">CCA tRNA nucleotidyltransferase</fullName>
        </alternativeName>
        <alternativeName>
            <fullName evidence="1">tRNA CCA-pyrophosphorylase</fullName>
        </alternativeName>
        <alternativeName>
            <fullName evidence="1">tRNA adenylyl-/cytidylyl-transferase</fullName>
        </alternativeName>
        <alternativeName>
            <fullName evidence="1">tRNA nucleotidyltransferase</fullName>
        </alternativeName>
        <alternativeName>
            <fullName evidence="1">tRNA-NT</fullName>
        </alternativeName>
    </domain>
    <domain>
        <recommendedName>
            <fullName evidence="1">2'-nucleotidase</fullName>
            <ecNumber evidence="1">3.1.3.-</ecNumber>
        </recommendedName>
    </domain>
    <domain>
        <recommendedName>
            <fullName evidence="1">2',3'-cyclic phosphodiesterase</fullName>
            <ecNumber evidence="1">3.1.4.-</ecNumber>
        </recommendedName>
    </domain>
    <domain>
        <recommendedName>
            <fullName evidence="1">Phosphatase</fullName>
            <ecNumber evidence="1">3.1.3.-</ecNumber>
        </recommendedName>
    </domain>
</protein>
<proteinExistence type="inferred from homology"/>
<sequence length="412" mass="46582">MKIYLVGGAVRDALLGLPVKDRDWVVVGSTPQEMLDAGYQQVGRDFPVFLHPQTHEEYALARTERKSGSGYTGFTCYAAPDVTLEDDLKRRDLTINALAQDDNGEIIDPYNGLGDLQNRLLRHVSPAFGEDPLRVLRVARFAARYAHLGFRIADETLTLMREMTHAGELEHLTPERVWKETENALTTRNPQVFFQVLRDCGALRVLFPEIDALFGVPAPARWHPEIDTGIHTLMTLSMAAMLSPQVDVRFTTLCHDLGKGLTPPELWPRHHGHGPAGVKLVEQLCQRLRVPNEIRDLARLVAEFHDLIHTFPMLNPKTIVKLFDSIDAWRKPQRVEQLALTSEADVRGRTGFESADYPQGRWLREAWEVAQSVPTKAVVEAGFKGVEIREELTRRRIAAVASWKEQRCPKPE</sequence>
<evidence type="ECO:0000255" key="1">
    <source>
        <dbReference type="HAMAP-Rule" id="MF_01261"/>
    </source>
</evidence>
<feature type="chain" id="PRO_0000138976" description="Multifunctional CCA protein">
    <location>
        <begin position="1"/>
        <end position="412"/>
    </location>
</feature>
<feature type="domain" description="HD" evidence="1">
    <location>
        <begin position="228"/>
        <end position="329"/>
    </location>
</feature>
<feature type="binding site" evidence="1">
    <location>
        <position position="8"/>
    </location>
    <ligand>
        <name>ATP</name>
        <dbReference type="ChEBI" id="CHEBI:30616"/>
    </ligand>
</feature>
<feature type="binding site" evidence="1">
    <location>
        <position position="8"/>
    </location>
    <ligand>
        <name>CTP</name>
        <dbReference type="ChEBI" id="CHEBI:37563"/>
    </ligand>
</feature>
<feature type="binding site" evidence="1">
    <location>
        <position position="11"/>
    </location>
    <ligand>
        <name>ATP</name>
        <dbReference type="ChEBI" id="CHEBI:30616"/>
    </ligand>
</feature>
<feature type="binding site" evidence="1">
    <location>
        <position position="11"/>
    </location>
    <ligand>
        <name>CTP</name>
        <dbReference type="ChEBI" id="CHEBI:37563"/>
    </ligand>
</feature>
<feature type="binding site" evidence="1">
    <location>
        <position position="21"/>
    </location>
    <ligand>
        <name>Mg(2+)</name>
        <dbReference type="ChEBI" id="CHEBI:18420"/>
    </ligand>
</feature>
<feature type="binding site" evidence="1">
    <location>
        <position position="23"/>
    </location>
    <ligand>
        <name>Mg(2+)</name>
        <dbReference type="ChEBI" id="CHEBI:18420"/>
    </ligand>
</feature>
<feature type="binding site" evidence="1">
    <location>
        <position position="91"/>
    </location>
    <ligand>
        <name>ATP</name>
        <dbReference type="ChEBI" id="CHEBI:30616"/>
    </ligand>
</feature>
<feature type="binding site" evidence="1">
    <location>
        <position position="91"/>
    </location>
    <ligand>
        <name>CTP</name>
        <dbReference type="ChEBI" id="CHEBI:37563"/>
    </ligand>
</feature>
<feature type="binding site" evidence="1">
    <location>
        <position position="137"/>
    </location>
    <ligand>
        <name>ATP</name>
        <dbReference type="ChEBI" id="CHEBI:30616"/>
    </ligand>
</feature>
<feature type="binding site" evidence="1">
    <location>
        <position position="137"/>
    </location>
    <ligand>
        <name>CTP</name>
        <dbReference type="ChEBI" id="CHEBI:37563"/>
    </ligand>
</feature>
<feature type="binding site" evidence="1">
    <location>
        <position position="140"/>
    </location>
    <ligand>
        <name>ATP</name>
        <dbReference type="ChEBI" id="CHEBI:30616"/>
    </ligand>
</feature>
<feature type="binding site" evidence="1">
    <location>
        <position position="140"/>
    </location>
    <ligand>
        <name>CTP</name>
        <dbReference type="ChEBI" id="CHEBI:37563"/>
    </ligand>
</feature>
<keyword id="KW-0067">ATP-binding</keyword>
<keyword id="KW-0378">Hydrolase</keyword>
<keyword id="KW-0460">Magnesium</keyword>
<keyword id="KW-0479">Metal-binding</keyword>
<keyword id="KW-0511">Multifunctional enzyme</keyword>
<keyword id="KW-0533">Nickel</keyword>
<keyword id="KW-0547">Nucleotide-binding</keyword>
<keyword id="KW-0548">Nucleotidyltransferase</keyword>
<keyword id="KW-1185">Reference proteome</keyword>
<keyword id="KW-0692">RNA repair</keyword>
<keyword id="KW-0694">RNA-binding</keyword>
<keyword id="KW-0808">Transferase</keyword>
<keyword id="KW-0819">tRNA processing</keyword>
<dbReference type="EC" id="2.7.7.72" evidence="1"/>
<dbReference type="EC" id="3.1.3.-" evidence="1"/>
<dbReference type="EC" id="3.1.4.-" evidence="1"/>
<dbReference type="EMBL" id="AE005174">
    <property type="protein sequence ID" value="AAG58190.1"/>
    <property type="molecule type" value="Genomic_DNA"/>
</dbReference>
<dbReference type="EMBL" id="BA000007">
    <property type="protein sequence ID" value="BAB37362.1"/>
    <property type="molecule type" value="Genomic_DNA"/>
</dbReference>
<dbReference type="PIR" id="B85966">
    <property type="entry name" value="B85966"/>
</dbReference>
<dbReference type="PIR" id="C91121">
    <property type="entry name" value="C91121"/>
</dbReference>
<dbReference type="RefSeq" id="NP_311966.1">
    <property type="nucleotide sequence ID" value="NC_002695.1"/>
</dbReference>
<dbReference type="RefSeq" id="WP_000708496.1">
    <property type="nucleotide sequence ID" value="NZ_VOAI01000009.1"/>
</dbReference>
<dbReference type="SMR" id="Q8XBL4"/>
<dbReference type="STRING" id="155864.Z4409"/>
<dbReference type="GeneID" id="916235"/>
<dbReference type="KEGG" id="ece:Z4409"/>
<dbReference type="KEGG" id="ecs:ECs_3939"/>
<dbReference type="PATRIC" id="fig|386585.9.peg.4108"/>
<dbReference type="eggNOG" id="COG0617">
    <property type="taxonomic scope" value="Bacteria"/>
</dbReference>
<dbReference type="HOGENOM" id="CLU_015961_1_1_6"/>
<dbReference type="OMA" id="GWTFHGH"/>
<dbReference type="Proteomes" id="UP000000558">
    <property type="component" value="Chromosome"/>
</dbReference>
<dbReference type="Proteomes" id="UP000002519">
    <property type="component" value="Chromosome"/>
</dbReference>
<dbReference type="GO" id="GO:0005524">
    <property type="term" value="F:ATP binding"/>
    <property type="evidence" value="ECO:0007669"/>
    <property type="project" value="UniProtKB-UniRule"/>
</dbReference>
<dbReference type="GO" id="GO:0004810">
    <property type="term" value="F:CCA tRNA nucleotidyltransferase activity"/>
    <property type="evidence" value="ECO:0007669"/>
    <property type="project" value="UniProtKB-UniRule"/>
</dbReference>
<dbReference type="GO" id="GO:0004112">
    <property type="term" value="F:cyclic-nucleotide phosphodiesterase activity"/>
    <property type="evidence" value="ECO:0007669"/>
    <property type="project" value="UniProtKB-UniRule"/>
</dbReference>
<dbReference type="GO" id="GO:0000287">
    <property type="term" value="F:magnesium ion binding"/>
    <property type="evidence" value="ECO:0007669"/>
    <property type="project" value="UniProtKB-UniRule"/>
</dbReference>
<dbReference type="GO" id="GO:0016791">
    <property type="term" value="F:phosphatase activity"/>
    <property type="evidence" value="ECO:0007669"/>
    <property type="project" value="UniProtKB-UniRule"/>
</dbReference>
<dbReference type="GO" id="GO:0000049">
    <property type="term" value="F:tRNA binding"/>
    <property type="evidence" value="ECO:0007669"/>
    <property type="project" value="UniProtKB-UniRule"/>
</dbReference>
<dbReference type="GO" id="GO:0042245">
    <property type="term" value="P:RNA repair"/>
    <property type="evidence" value="ECO:0007669"/>
    <property type="project" value="UniProtKB-KW"/>
</dbReference>
<dbReference type="GO" id="GO:0001680">
    <property type="term" value="P:tRNA 3'-terminal CCA addition"/>
    <property type="evidence" value="ECO:0007669"/>
    <property type="project" value="UniProtKB-UniRule"/>
</dbReference>
<dbReference type="CDD" id="cd00077">
    <property type="entry name" value="HDc"/>
    <property type="match status" value="1"/>
</dbReference>
<dbReference type="CDD" id="cd05398">
    <property type="entry name" value="NT_ClassII-CCAase"/>
    <property type="match status" value="1"/>
</dbReference>
<dbReference type="FunFam" id="1.10.3090.10:FF:000001">
    <property type="entry name" value="Multifunctional CCA protein"/>
    <property type="match status" value="1"/>
</dbReference>
<dbReference type="FunFam" id="3.30.460.10:FF:000016">
    <property type="entry name" value="Multifunctional CCA protein"/>
    <property type="match status" value="1"/>
</dbReference>
<dbReference type="Gene3D" id="3.30.460.10">
    <property type="entry name" value="Beta Polymerase, domain 2"/>
    <property type="match status" value="1"/>
</dbReference>
<dbReference type="Gene3D" id="1.10.3090.10">
    <property type="entry name" value="cca-adding enzyme, domain 2"/>
    <property type="match status" value="1"/>
</dbReference>
<dbReference type="HAMAP" id="MF_01261">
    <property type="entry name" value="CCA_bact_type1"/>
    <property type="match status" value="1"/>
</dbReference>
<dbReference type="HAMAP" id="MF_01262">
    <property type="entry name" value="CCA_bact_type2"/>
    <property type="match status" value="1"/>
</dbReference>
<dbReference type="InterPro" id="IPR012006">
    <property type="entry name" value="CCA_bact"/>
</dbReference>
<dbReference type="InterPro" id="IPR003607">
    <property type="entry name" value="HD/PDEase_dom"/>
</dbReference>
<dbReference type="InterPro" id="IPR006674">
    <property type="entry name" value="HD_domain"/>
</dbReference>
<dbReference type="InterPro" id="IPR043519">
    <property type="entry name" value="NT_sf"/>
</dbReference>
<dbReference type="InterPro" id="IPR002646">
    <property type="entry name" value="PolA_pol_head_dom"/>
</dbReference>
<dbReference type="InterPro" id="IPR032828">
    <property type="entry name" value="PolyA_RNA-bd"/>
</dbReference>
<dbReference type="InterPro" id="IPR050124">
    <property type="entry name" value="tRNA_CCA-adding_enzyme"/>
</dbReference>
<dbReference type="NCBIfam" id="NF008137">
    <property type="entry name" value="PRK10885.1"/>
    <property type="match status" value="1"/>
</dbReference>
<dbReference type="PANTHER" id="PTHR47545">
    <property type="entry name" value="MULTIFUNCTIONAL CCA PROTEIN"/>
    <property type="match status" value="1"/>
</dbReference>
<dbReference type="PANTHER" id="PTHR47545:SF1">
    <property type="entry name" value="MULTIFUNCTIONAL CCA PROTEIN"/>
    <property type="match status" value="1"/>
</dbReference>
<dbReference type="Pfam" id="PF01966">
    <property type="entry name" value="HD"/>
    <property type="match status" value="1"/>
</dbReference>
<dbReference type="Pfam" id="PF01743">
    <property type="entry name" value="PolyA_pol"/>
    <property type="match status" value="1"/>
</dbReference>
<dbReference type="Pfam" id="PF12627">
    <property type="entry name" value="PolyA_pol_RNAbd"/>
    <property type="match status" value="1"/>
</dbReference>
<dbReference type="PIRSF" id="PIRSF000813">
    <property type="entry name" value="CCA_bact"/>
    <property type="match status" value="1"/>
</dbReference>
<dbReference type="SUPFAM" id="SSF81301">
    <property type="entry name" value="Nucleotidyltransferase"/>
    <property type="match status" value="1"/>
</dbReference>
<dbReference type="SUPFAM" id="SSF81891">
    <property type="entry name" value="Poly A polymerase C-terminal region-like"/>
    <property type="match status" value="1"/>
</dbReference>
<dbReference type="PROSITE" id="PS51831">
    <property type="entry name" value="HD"/>
    <property type="match status" value="1"/>
</dbReference>
<reference key="1">
    <citation type="journal article" date="2001" name="Nature">
        <title>Genome sequence of enterohaemorrhagic Escherichia coli O157:H7.</title>
        <authorList>
            <person name="Perna N.T."/>
            <person name="Plunkett G. III"/>
            <person name="Burland V."/>
            <person name="Mau B."/>
            <person name="Glasner J.D."/>
            <person name="Rose D.J."/>
            <person name="Mayhew G.F."/>
            <person name="Evans P.S."/>
            <person name="Gregor J."/>
            <person name="Kirkpatrick H.A."/>
            <person name="Posfai G."/>
            <person name="Hackett J."/>
            <person name="Klink S."/>
            <person name="Boutin A."/>
            <person name="Shao Y."/>
            <person name="Miller L."/>
            <person name="Grotbeck E.J."/>
            <person name="Davis N.W."/>
            <person name="Lim A."/>
            <person name="Dimalanta E.T."/>
            <person name="Potamousis K."/>
            <person name="Apodaca J."/>
            <person name="Anantharaman T.S."/>
            <person name="Lin J."/>
            <person name="Yen G."/>
            <person name="Schwartz D.C."/>
            <person name="Welch R.A."/>
            <person name="Blattner F.R."/>
        </authorList>
    </citation>
    <scope>NUCLEOTIDE SEQUENCE [LARGE SCALE GENOMIC DNA]</scope>
    <source>
        <strain>O157:H7 / EDL933 / ATCC 700927 / EHEC</strain>
    </source>
</reference>
<reference key="2">
    <citation type="journal article" date="2001" name="DNA Res.">
        <title>Complete genome sequence of enterohemorrhagic Escherichia coli O157:H7 and genomic comparison with a laboratory strain K-12.</title>
        <authorList>
            <person name="Hayashi T."/>
            <person name="Makino K."/>
            <person name="Ohnishi M."/>
            <person name="Kurokawa K."/>
            <person name="Ishii K."/>
            <person name="Yokoyama K."/>
            <person name="Han C.-G."/>
            <person name="Ohtsubo E."/>
            <person name="Nakayama K."/>
            <person name="Murata T."/>
            <person name="Tanaka M."/>
            <person name="Tobe T."/>
            <person name="Iida T."/>
            <person name="Takami H."/>
            <person name="Honda T."/>
            <person name="Sasakawa C."/>
            <person name="Ogasawara N."/>
            <person name="Yasunaga T."/>
            <person name="Kuhara S."/>
            <person name="Shiba T."/>
            <person name="Hattori M."/>
            <person name="Shinagawa H."/>
        </authorList>
    </citation>
    <scope>NUCLEOTIDE SEQUENCE [LARGE SCALE GENOMIC DNA]</scope>
    <source>
        <strain>O157:H7 / Sakai / RIMD 0509952 / EHEC</strain>
    </source>
</reference>
<organism>
    <name type="scientific">Escherichia coli O157:H7</name>
    <dbReference type="NCBI Taxonomy" id="83334"/>
    <lineage>
        <taxon>Bacteria</taxon>
        <taxon>Pseudomonadati</taxon>
        <taxon>Pseudomonadota</taxon>
        <taxon>Gammaproteobacteria</taxon>
        <taxon>Enterobacterales</taxon>
        <taxon>Enterobacteriaceae</taxon>
        <taxon>Escherichia</taxon>
    </lineage>
</organism>
<gene>
    <name evidence="1" type="primary">cca</name>
    <name type="ordered locus">Z4409</name>
    <name type="ordered locus">ECs3939</name>
</gene>